<feature type="chain" id="PRO_0000392802" description="Dermonecrotic toxin LdSicTox-alphaIB3aiv">
    <location>
        <begin position="1" status="less than"/>
        <end position="273"/>
    </location>
</feature>
<feature type="active site" evidence="5">
    <location>
        <position position="5"/>
    </location>
</feature>
<feature type="active site" description="Nucleophile" evidence="5">
    <location>
        <position position="41"/>
    </location>
</feature>
<feature type="binding site" evidence="5">
    <location>
        <position position="25"/>
    </location>
    <ligand>
        <name>Mg(2+)</name>
        <dbReference type="ChEBI" id="CHEBI:18420"/>
    </ligand>
</feature>
<feature type="binding site" evidence="5">
    <location>
        <position position="27"/>
    </location>
    <ligand>
        <name>Mg(2+)</name>
        <dbReference type="ChEBI" id="CHEBI:18420"/>
    </ligand>
</feature>
<feature type="binding site" evidence="5">
    <location>
        <position position="85"/>
    </location>
    <ligand>
        <name>Mg(2+)</name>
        <dbReference type="ChEBI" id="CHEBI:18420"/>
    </ligand>
</feature>
<feature type="disulfide bond" evidence="3">
    <location>
        <begin position="45"/>
        <end position="51"/>
    </location>
</feature>
<feature type="disulfide bond" evidence="3">
    <location>
        <begin position="47"/>
        <end position="190"/>
    </location>
</feature>
<feature type="non-terminal residue">
    <location>
        <position position="1"/>
    </location>
</feature>
<reference key="1">
    <citation type="journal article" date="2009" name="Mol. Biol. Evol.">
        <title>Molecular evolution, functional variation, and proposed nomenclature of the gene family that includes sphingomyelinase D in sicariid spider venoms.</title>
        <authorList>
            <person name="Binford G.J."/>
            <person name="Bodner M.R."/>
            <person name="Cordes M.H."/>
            <person name="Baldwin K.L."/>
            <person name="Rynerson M.R."/>
            <person name="Burns S.N."/>
            <person name="Zobel-Thropp P.A."/>
        </authorList>
    </citation>
    <scope>NUCLEOTIDE SEQUENCE [MRNA]</scope>
    <scope>NOMENCLATURE</scope>
    <source>
        <tissue>Venom gland</tissue>
    </source>
</reference>
<accession>C0JAX7</accession>
<protein>
    <recommendedName>
        <fullName evidence="6">Dermonecrotic toxin LdSicTox-alphaIB3aiv</fullName>
        <ecNumber evidence="4">4.6.1.-</ecNumber>
    </recommendedName>
    <alternativeName>
        <fullName>Phospholipase D</fullName>
        <shortName>PLD</shortName>
    </alternativeName>
    <alternativeName>
        <fullName>Sphingomyelin phosphodiesterase D</fullName>
        <shortName>SMD</shortName>
        <shortName>SMase D</shortName>
        <shortName>Sphingomyelinase D</shortName>
    </alternativeName>
</protein>
<name>A1MA4_LOXDE</name>
<comment type="function">
    <text evidence="1 3">Dermonecrotic toxins cleave the phosphodiester linkage between the phosphate and headgroup of certain phospholipids (sphingolipid and lysolipid substrates), forming an alcohol (often choline) and a cyclic phosphate (By similarity). This toxin acts on sphingomyelin (SM) (By similarity). It may also act on ceramide phosphoethanolamine (CPE), lysophosphatidylcholine (LPC) and lysophosphatidylethanolamine (LPE), but not on lysophosphatidylserine (LPS), and lysophosphatidylglycerol (LPG) (By similarity). It acts by transphosphatidylation, releasing exclusively cyclic phosphate products as second products (By similarity). Induces dermonecrosis, hemolysis, increased vascular permeability, edema, inflammatory response, and platelet aggregation (By similarity).</text>
</comment>
<comment type="catalytic activity">
    <reaction evidence="1">
        <text>an N-(acyl)-sphingosylphosphocholine = an N-(acyl)-sphingosyl-1,3-cyclic phosphate + choline</text>
        <dbReference type="Rhea" id="RHEA:60652"/>
        <dbReference type="ChEBI" id="CHEBI:15354"/>
        <dbReference type="ChEBI" id="CHEBI:64583"/>
        <dbReference type="ChEBI" id="CHEBI:143892"/>
    </reaction>
</comment>
<comment type="catalytic activity">
    <reaction evidence="1">
        <text>an N-(acyl)-sphingosylphosphoethanolamine = an N-(acyl)-sphingosyl-1,3-cyclic phosphate + ethanolamine</text>
        <dbReference type="Rhea" id="RHEA:60648"/>
        <dbReference type="ChEBI" id="CHEBI:57603"/>
        <dbReference type="ChEBI" id="CHEBI:143891"/>
        <dbReference type="ChEBI" id="CHEBI:143892"/>
    </reaction>
</comment>
<comment type="catalytic activity">
    <reaction evidence="1">
        <text>a 1-acyl-sn-glycero-3-phosphocholine = a 1-acyl-sn-glycero-2,3-cyclic phosphate + choline</text>
        <dbReference type="Rhea" id="RHEA:60700"/>
        <dbReference type="ChEBI" id="CHEBI:15354"/>
        <dbReference type="ChEBI" id="CHEBI:58168"/>
        <dbReference type="ChEBI" id="CHEBI:143947"/>
    </reaction>
</comment>
<comment type="catalytic activity">
    <reaction evidence="1">
        <text>a 1-acyl-sn-glycero-3-phosphoethanolamine = a 1-acyl-sn-glycero-2,3-cyclic phosphate + ethanolamine</text>
        <dbReference type="Rhea" id="RHEA:60704"/>
        <dbReference type="ChEBI" id="CHEBI:57603"/>
        <dbReference type="ChEBI" id="CHEBI:64381"/>
        <dbReference type="ChEBI" id="CHEBI:143947"/>
    </reaction>
</comment>
<comment type="cofactor">
    <cofactor evidence="5">
        <name>Mg(2+)</name>
        <dbReference type="ChEBI" id="CHEBI:18420"/>
    </cofactor>
    <text evidence="5">Binds 1 Mg(2+) ion per subunit.</text>
</comment>
<comment type="subcellular location">
    <subcellularLocation>
        <location evidence="8">Secreted</location>
    </subcellularLocation>
</comment>
<comment type="tissue specificity">
    <text evidence="8">Expressed by the venom gland.</text>
</comment>
<comment type="similarity">
    <text evidence="7">Belongs to the arthropod phospholipase D family. Class II subfamily.</text>
</comment>
<comment type="caution">
    <text evidence="1 2 4">The most common activity assay for dermonecrotic toxins detects enzymatic activity by monitoring choline release from substrate. Liberation of choline from sphingomyelin (SM) or lysophosphatidylcholine (LPC) is commonly assumed to result from substrate hydrolysis, giving either ceramide-1-phosphate (C1P) or lysophosphatidic acid (LPA), respectively, as a second product. However, two studies from Lajoie and colleagues (2013 and 2015) report the observation of exclusive formation of cyclic phosphate products as second products, resulting from intramolecular transphosphatidylation. Cyclic phosphates have vastly different biological properties from their monoester counterparts, and they may be relevant to the pathology of brown spider envenomation.</text>
</comment>
<evidence type="ECO:0000250" key="1">
    <source>
        <dbReference type="UniProtKB" id="A0A0D4WTV1"/>
    </source>
</evidence>
<evidence type="ECO:0000250" key="2">
    <source>
        <dbReference type="UniProtKB" id="A0A0D4WV12"/>
    </source>
</evidence>
<evidence type="ECO:0000250" key="3">
    <source>
        <dbReference type="UniProtKB" id="P0CE80"/>
    </source>
</evidence>
<evidence type="ECO:0000250" key="4">
    <source>
        <dbReference type="UniProtKB" id="Q4ZFU2"/>
    </source>
</evidence>
<evidence type="ECO:0000250" key="5">
    <source>
        <dbReference type="UniProtKB" id="Q8I914"/>
    </source>
</evidence>
<evidence type="ECO:0000303" key="6">
    <source>
    </source>
</evidence>
<evidence type="ECO:0000305" key="7"/>
<evidence type="ECO:0000305" key="8">
    <source>
    </source>
</evidence>
<proteinExistence type="evidence at transcript level"/>
<sequence length="273" mass="30415">WIMGHMVNAIAQIDEFVNLGANSIETDVSFDKNANPEYTYHGIPCGCGRTCTKSEKFNVFLQGLQKATTPGDSKYQEKLVLVVFDLKSSSLYDNQASDAGKKLAKSLLQNYWKNGNNGGRAYIVLSIPNLAHYKLITGFKETLKTEGHPELMEKVGYDFFGNDDIDQVAKAYKKAGVTGHVWQSDGITNCLPRGLDRVKQAVANRDSSNGFINKVYYWTVDKRSTTRGALDAGVDGIMTNYPDVIADVLSESAYKSKFRIATYEDNPWETFKN</sequence>
<dbReference type="EC" id="4.6.1.-" evidence="4"/>
<dbReference type="EMBL" id="FJ171412">
    <property type="protein sequence ID" value="ACN48908.1"/>
    <property type="molecule type" value="mRNA"/>
</dbReference>
<dbReference type="SMR" id="C0JAX7"/>
<dbReference type="GO" id="GO:0005576">
    <property type="term" value="C:extracellular region"/>
    <property type="evidence" value="ECO:0007669"/>
    <property type="project" value="UniProtKB-SubCell"/>
</dbReference>
<dbReference type="GO" id="GO:0016829">
    <property type="term" value="F:lyase activity"/>
    <property type="evidence" value="ECO:0007669"/>
    <property type="project" value="UniProtKB-KW"/>
</dbReference>
<dbReference type="GO" id="GO:0046872">
    <property type="term" value="F:metal ion binding"/>
    <property type="evidence" value="ECO:0007669"/>
    <property type="project" value="UniProtKB-KW"/>
</dbReference>
<dbReference type="GO" id="GO:0008081">
    <property type="term" value="F:phosphoric diester hydrolase activity"/>
    <property type="evidence" value="ECO:0007669"/>
    <property type="project" value="InterPro"/>
</dbReference>
<dbReference type="GO" id="GO:0090729">
    <property type="term" value="F:toxin activity"/>
    <property type="evidence" value="ECO:0007669"/>
    <property type="project" value="UniProtKB-KW"/>
</dbReference>
<dbReference type="GO" id="GO:0031640">
    <property type="term" value="P:killing of cells of another organism"/>
    <property type="evidence" value="ECO:0007669"/>
    <property type="project" value="UniProtKB-KW"/>
</dbReference>
<dbReference type="GO" id="GO:0016042">
    <property type="term" value="P:lipid catabolic process"/>
    <property type="evidence" value="ECO:0007669"/>
    <property type="project" value="UniProtKB-KW"/>
</dbReference>
<dbReference type="CDD" id="cd08576">
    <property type="entry name" value="GDPD_like_SMaseD_PLD"/>
    <property type="match status" value="1"/>
</dbReference>
<dbReference type="Gene3D" id="3.20.20.190">
    <property type="entry name" value="Phosphatidylinositol (PI) phosphodiesterase"/>
    <property type="match status" value="1"/>
</dbReference>
<dbReference type="InterPro" id="IPR017946">
    <property type="entry name" value="PLC-like_Pdiesterase_TIM-brl"/>
</dbReference>
<dbReference type="Pfam" id="PF13653">
    <property type="entry name" value="GDPD_2"/>
    <property type="match status" value="1"/>
</dbReference>
<dbReference type="SUPFAM" id="SSF51695">
    <property type="entry name" value="PLC-like phosphodiesterases"/>
    <property type="match status" value="1"/>
</dbReference>
<keyword id="KW-0204">Cytolysis</keyword>
<keyword id="KW-1061">Dermonecrotic toxin</keyword>
<keyword id="KW-1015">Disulfide bond</keyword>
<keyword id="KW-0354">Hemolysis</keyword>
<keyword id="KW-0442">Lipid degradation</keyword>
<keyword id="KW-0443">Lipid metabolism</keyword>
<keyword id="KW-0456">Lyase</keyword>
<keyword id="KW-0460">Magnesium</keyword>
<keyword id="KW-0479">Metal-binding</keyword>
<keyword id="KW-0964">Secreted</keyword>
<keyword id="KW-0800">Toxin</keyword>
<organism>
    <name type="scientific">Loxosceles deserta</name>
    <name type="common">Desert recluse spider</name>
    <dbReference type="NCBI Taxonomy" id="424440"/>
    <lineage>
        <taxon>Eukaryota</taxon>
        <taxon>Metazoa</taxon>
        <taxon>Ecdysozoa</taxon>
        <taxon>Arthropoda</taxon>
        <taxon>Chelicerata</taxon>
        <taxon>Arachnida</taxon>
        <taxon>Araneae</taxon>
        <taxon>Araneomorphae</taxon>
        <taxon>Haplogynae</taxon>
        <taxon>Scytodoidea</taxon>
        <taxon>Sicariidae</taxon>
        <taxon>Loxosceles</taxon>
    </lineage>
</organism>